<feature type="chain" id="PRO_0000422777" description="Probable plasmid-partitioning protein ParA">
    <location>
        <begin position="1"/>
        <end position="322"/>
    </location>
</feature>
<feature type="binding site" evidence="2">
    <location>
        <begin position="60"/>
        <end position="67"/>
    </location>
    <ligand>
        <name>ATP</name>
        <dbReference type="ChEBI" id="CHEBI:30616"/>
    </ligand>
</feature>
<proteinExistence type="inferred from homology"/>
<sequence length="322" mass="35951">MKQGELVPVSEMARRLGVTRERVRQMILEGKLEGVRLGRYWYVREREGGRLRRVYTFFTHAGGAGKTSLARDLGFELARRGFRVLLVDTDPQANLTSWLGVREVAPEETLLHLVDTGQLPTPRRLSEWGLDLIPASLDLARVEVRLMQRPLSTLLLRTALRKTEGYDFVLIDSLPSLGHLAALGALAGDGLLVPVETSVKGVEALVGVMEAAQEYREALEQVDPRVPRSFVRLFIPTKFDARTLGDNRVLEKIAGLEDLAPVASPIAYRPGPHRRATERAVPLQLVGDRQAREEVERLTEEFLQRVVAQDAAREGVLEEVAE</sequence>
<dbReference type="EMBL" id="AE017222">
    <property type="protein sequence ID" value="AAS82414.1"/>
    <property type="molecule type" value="Genomic_DNA"/>
</dbReference>
<dbReference type="RefSeq" id="WP_011174477.1">
    <property type="nucleotide sequence ID" value="NC_005838.1"/>
</dbReference>
<dbReference type="SMR" id="Q746H1"/>
<dbReference type="KEGG" id="tth:TT_P0084"/>
<dbReference type="eggNOG" id="COG1192">
    <property type="taxonomic scope" value="Bacteria"/>
</dbReference>
<dbReference type="HOGENOM" id="CLU_037612_1_2_0"/>
<dbReference type="OrthoDB" id="69313at2"/>
<dbReference type="Proteomes" id="UP000000592">
    <property type="component" value="Plasmid pTT27"/>
</dbReference>
<dbReference type="GO" id="GO:0005524">
    <property type="term" value="F:ATP binding"/>
    <property type="evidence" value="ECO:0007669"/>
    <property type="project" value="UniProtKB-KW"/>
</dbReference>
<dbReference type="GO" id="GO:0007059">
    <property type="term" value="P:chromosome segregation"/>
    <property type="evidence" value="ECO:0007669"/>
    <property type="project" value="UniProtKB-KW"/>
</dbReference>
<dbReference type="CDD" id="cd02042">
    <property type="entry name" value="ParAB_family"/>
    <property type="match status" value="1"/>
</dbReference>
<dbReference type="Gene3D" id="3.40.50.300">
    <property type="entry name" value="P-loop containing nucleotide triphosphate hydrolases"/>
    <property type="match status" value="1"/>
</dbReference>
<dbReference type="InterPro" id="IPR025669">
    <property type="entry name" value="AAA_dom"/>
</dbReference>
<dbReference type="InterPro" id="IPR050678">
    <property type="entry name" value="DNA_Partitioning_ATPase"/>
</dbReference>
<dbReference type="InterPro" id="IPR027417">
    <property type="entry name" value="P-loop_NTPase"/>
</dbReference>
<dbReference type="PANTHER" id="PTHR13696">
    <property type="entry name" value="P-LOOP CONTAINING NUCLEOSIDE TRIPHOSPHATE HYDROLASE"/>
    <property type="match status" value="1"/>
</dbReference>
<dbReference type="PANTHER" id="PTHR13696:SF52">
    <property type="entry name" value="PARA FAMILY PROTEIN CT_582"/>
    <property type="match status" value="1"/>
</dbReference>
<dbReference type="Pfam" id="PF13614">
    <property type="entry name" value="AAA_31"/>
    <property type="match status" value="1"/>
</dbReference>
<dbReference type="SUPFAM" id="SSF52540">
    <property type="entry name" value="P-loop containing nucleoside triphosphate hydrolases"/>
    <property type="match status" value="1"/>
</dbReference>
<organism>
    <name type="scientific">Thermus thermophilus (strain ATCC BAA-163 / DSM 7039 / HB27)</name>
    <dbReference type="NCBI Taxonomy" id="262724"/>
    <lineage>
        <taxon>Bacteria</taxon>
        <taxon>Thermotogati</taxon>
        <taxon>Deinococcota</taxon>
        <taxon>Deinococci</taxon>
        <taxon>Thermales</taxon>
        <taxon>Thermaceae</taxon>
        <taxon>Thermus</taxon>
    </lineage>
</organism>
<reference key="1">
    <citation type="journal article" date="2004" name="Nat. Biotechnol.">
        <title>The genome sequence of the extreme thermophile Thermus thermophilus.</title>
        <authorList>
            <person name="Henne A."/>
            <person name="Brueggemann H."/>
            <person name="Raasch C."/>
            <person name="Wiezer A."/>
            <person name="Hartsch T."/>
            <person name="Liesegang H."/>
            <person name="Johann A."/>
            <person name="Lienard T."/>
            <person name="Gohl O."/>
            <person name="Martinez-Arias R."/>
            <person name="Jacobi C."/>
            <person name="Starkuviene V."/>
            <person name="Schlenczeck S."/>
            <person name="Dencker S."/>
            <person name="Huber R."/>
            <person name="Klenk H.-P."/>
            <person name="Kramer W."/>
            <person name="Merkl R."/>
            <person name="Gottschalk G."/>
            <person name="Fritz H.-J."/>
        </authorList>
    </citation>
    <scope>NUCLEOTIDE SEQUENCE [LARGE SCALE GENOMIC DNA]</scope>
    <source>
        <strain>ATCC BAA-163 / DSM 7039 / HB27</strain>
    </source>
</reference>
<name>PARA_THET2</name>
<keyword id="KW-0067">ATP-binding</keyword>
<keyword id="KW-0159">Chromosome partition</keyword>
<keyword id="KW-0547">Nucleotide-binding</keyword>
<keyword id="KW-0614">Plasmid</keyword>
<geneLocation type="plasmid">
    <name>pTT27</name>
</geneLocation>
<protein>
    <recommendedName>
        <fullName>Probable plasmid-partitioning protein ParA</fullName>
    </recommendedName>
</protein>
<gene>
    <name type="primary">parA</name>
    <name type="ordered locus">TT_P0084</name>
</gene>
<accession>Q746H1</accession>
<comment type="function">
    <text evidence="1">Probably involved in plasmid DNA partitioning.</text>
</comment>
<comment type="similarity">
    <text evidence="3">Belongs to the ParA family.</text>
</comment>
<evidence type="ECO:0000250" key="1"/>
<evidence type="ECO:0000255" key="2"/>
<evidence type="ECO:0000305" key="3"/>